<feature type="chain" id="PRO_0000052696" description="Hemoglobin subunit alpha-1/2">
    <location>
        <begin position="1"/>
        <end position="141"/>
    </location>
</feature>
<feature type="domain" description="Globin" evidence="3">
    <location>
        <begin position="1"/>
        <end position="141"/>
    </location>
</feature>
<feature type="binding site" evidence="3">
    <location>
        <position position="58"/>
    </location>
    <ligand>
        <name>O2</name>
        <dbReference type="ChEBI" id="CHEBI:15379"/>
    </ligand>
</feature>
<feature type="binding site" description="proximal binding residue" evidence="3">
    <location>
        <position position="87"/>
    </location>
    <ligand>
        <name>heme b</name>
        <dbReference type="ChEBI" id="CHEBI:60344"/>
    </ligand>
    <ligandPart>
        <name>Fe</name>
        <dbReference type="ChEBI" id="CHEBI:18248"/>
    </ligandPart>
</feature>
<feature type="modified residue" description="Phosphoserine" evidence="2">
    <location>
        <position position="3"/>
    </location>
</feature>
<feature type="modified residue" description="N6-succinyllysine" evidence="1">
    <location>
        <position position="7"/>
    </location>
</feature>
<feature type="modified residue" description="Phosphothreonine" evidence="2">
    <location>
        <position position="8"/>
    </location>
</feature>
<feature type="modified residue" description="N6-succinyllysine" evidence="1">
    <location>
        <position position="11"/>
    </location>
</feature>
<feature type="modified residue" description="N6-acetyllysine; alternate" evidence="2">
    <location>
        <position position="16"/>
    </location>
</feature>
<feature type="modified residue" description="N6-succinyllysine; alternate" evidence="1">
    <location>
        <position position="16"/>
    </location>
</feature>
<feature type="modified residue" description="Phosphotyrosine" evidence="2">
    <location>
        <position position="24"/>
    </location>
</feature>
<feature type="modified residue" description="Phosphoserine" evidence="2">
    <location>
        <position position="35"/>
    </location>
</feature>
<feature type="modified residue" description="N6-succinyllysine" evidence="1">
    <location>
        <position position="40"/>
    </location>
</feature>
<feature type="modified residue" description="Phosphoserine" evidence="2">
    <location>
        <position position="49"/>
    </location>
</feature>
<feature type="modified residue" description="Phosphoserine" evidence="1">
    <location>
        <position position="102"/>
    </location>
</feature>
<feature type="modified residue" description="Phosphothreonine" evidence="1">
    <location>
        <position position="108"/>
    </location>
</feature>
<feature type="modified residue" description="Phosphoserine" evidence="1">
    <location>
        <position position="124"/>
    </location>
</feature>
<feature type="modified residue" description="Phosphothreonine" evidence="1">
    <location>
        <position position="134"/>
    </location>
</feature>
<feature type="modified residue" description="Phosphothreonine" evidence="1">
    <location>
        <position position="137"/>
    </location>
</feature>
<feature type="modified residue" description="Phosphoserine" evidence="1">
    <location>
        <position position="138"/>
    </location>
</feature>
<feature type="sequence variant" description="In alpha-2." evidence="4">
    <original>D</original>
    <variation>G</variation>
    <location>
        <position position="15"/>
    </location>
</feature>
<proteinExistence type="evidence at protein level"/>
<keyword id="KW-0007">Acetylation</keyword>
<keyword id="KW-0903">Direct protein sequencing</keyword>
<keyword id="KW-0349">Heme</keyword>
<keyword id="KW-0408">Iron</keyword>
<keyword id="KW-0479">Metal-binding</keyword>
<keyword id="KW-0561">Oxygen transport</keyword>
<keyword id="KW-0597">Phosphoprotein</keyword>
<keyword id="KW-0813">Transport</keyword>
<evidence type="ECO:0000250" key="1">
    <source>
        <dbReference type="UniProtKB" id="P01942"/>
    </source>
</evidence>
<evidence type="ECO:0000250" key="2">
    <source>
        <dbReference type="UniProtKB" id="P69905"/>
    </source>
</evidence>
<evidence type="ECO:0000255" key="3">
    <source>
        <dbReference type="PROSITE-ProRule" id="PRU00238"/>
    </source>
</evidence>
<evidence type="ECO:0000269" key="4">
    <source>
    </source>
</evidence>
<protein>
    <recommendedName>
        <fullName>Hemoglobin subunit alpha-1/2</fullName>
    </recommendedName>
    <alternativeName>
        <fullName>Alpha-1/2-globin</fullName>
    </alternativeName>
    <alternativeName>
        <fullName>Hemoglobin alpha-1/2 chain</fullName>
    </alternativeName>
</protein>
<reference key="1">
    <citation type="journal article" date="1990" name="Z. Naturforsch. C">
        <title>Carnivora: the amino acid sequence of the adult European mink (Mustela lutreola, Mustelidae) hemoglobins.</title>
        <authorList>
            <person name="Ahmed A."/>
            <person name="Jahan M."/>
            <person name="Braunitzer G."/>
        </authorList>
    </citation>
    <scope>PROTEIN SEQUENCE</scope>
</reference>
<accession>P23600</accession>
<dbReference type="PIR" id="S10104">
    <property type="entry name" value="HAMN1E"/>
</dbReference>
<dbReference type="PIR" id="S20157">
    <property type="entry name" value="HAMN2E"/>
</dbReference>
<dbReference type="SMR" id="P23600"/>
<dbReference type="GO" id="GO:0072562">
    <property type="term" value="C:blood microparticle"/>
    <property type="evidence" value="ECO:0007669"/>
    <property type="project" value="TreeGrafter"/>
</dbReference>
<dbReference type="GO" id="GO:0031838">
    <property type="term" value="C:haptoglobin-hemoglobin complex"/>
    <property type="evidence" value="ECO:0007669"/>
    <property type="project" value="TreeGrafter"/>
</dbReference>
<dbReference type="GO" id="GO:0005833">
    <property type="term" value="C:hemoglobin complex"/>
    <property type="evidence" value="ECO:0007669"/>
    <property type="project" value="InterPro"/>
</dbReference>
<dbReference type="GO" id="GO:0031720">
    <property type="term" value="F:haptoglobin binding"/>
    <property type="evidence" value="ECO:0007669"/>
    <property type="project" value="TreeGrafter"/>
</dbReference>
<dbReference type="GO" id="GO:0020037">
    <property type="term" value="F:heme binding"/>
    <property type="evidence" value="ECO:0007669"/>
    <property type="project" value="InterPro"/>
</dbReference>
<dbReference type="GO" id="GO:0005506">
    <property type="term" value="F:iron ion binding"/>
    <property type="evidence" value="ECO:0007669"/>
    <property type="project" value="InterPro"/>
</dbReference>
<dbReference type="GO" id="GO:0043177">
    <property type="term" value="F:organic acid binding"/>
    <property type="evidence" value="ECO:0007669"/>
    <property type="project" value="TreeGrafter"/>
</dbReference>
<dbReference type="GO" id="GO:0019825">
    <property type="term" value="F:oxygen binding"/>
    <property type="evidence" value="ECO:0007669"/>
    <property type="project" value="InterPro"/>
</dbReference>
<dbReference type="GO" id="GO:0005344">
    <property type="term" value="F:oxygen carrier activity"/>
    <property type="evidence" value="ECO:0007669"/>
    <property type="project" value="UniProtKB-KW"/>
</dbReference>
<dbReference type="GO" id="GO:0004601">
    <property type="term" value="F:peroxidase activity"/>
    <property type="evidence" value="ECO:0007669"/>
    <property type="project" value="TreeGrafter"/>
</dbReference>
<dbReference type="GO" id="GO:0042744">
    <property type="term" value="P:hydrogen peroxide catabolic process"/>
    <property type="evidence" value="ECO:0007669"/>
    <property type="project" value="TreeGrafter"/>
</dbReference>
<dbReference type="CDD" id="cd08927">
    <property type="entry name" value="Hb-alpha-like"/>
    <property type="match status" value="1"/>
</dbReference>
<dbReference type="FunFam" id="1.10.490.10:FF:000002">
    <property type="entry name" value="Hemoglobin subunit alpha"/>
    <property type="match status" value="1"/>
</dbReference>
<dbReference type="Gene3D" id="1.10.490.10">
    <property type="entry name" value="Globins"/>
    <property type="match status" value="1"/>
</dbReference>
<dbReference type="InterPro" id="IPR000971">
    <property type="entry name" value="Globin"/>
</dbReference>
<dbReference type="InterPro" id="IPR009050">
    <property type="entry name" value="Globin-like_sf"/>
</dbReference>
<dbReference type="InterPro" id="IPR012292">
    <property type="entry name" value="Globin/Proto"/>
</dbReference>
<dbReference type="InterPro" id="IPR002338">
    <property type="entry name" value="Hemoglobin_a-typ"/>
</dbReference>
<dbReference type="InterPro" id="IPR050056">
    <property type="entry name" value="Hemoglobin_oxygen_transport"/>
</dbReference>
<dbReference type="InterPro" id="IPR002339">
    <property type="entry name" value="Hemoglobin_pi"/>
</dbReference>
<dbReference type="PANTHER" id="PTHR11442">
    <property type="entry name" value="HEMOGLOBIN FAMILY MEMBER"/>
    <property type="match status" value="1"/>
</dbReference>
<dbReference type="PANTHER" id="PTHR11442:SF48">
    <property type="entry name" value="HEMOGLOBIN SUBUNIT ALPHA"/>
    <property type="match status" value="1"/>
</dbReference>
<dbReference type="Pfam" id="PF00042">
    <property type="entry name" value="Globin"/>
    <property type="match status" value="1"/>
</dbReference>
<dbReference type="PRINTS" id="PR00612">
    <property type="entry name" value="ALPHAHAEM"/>
</dbReference>
<dbReference type="PRINTS" id="PR00815">
    <property type="entry name" value="PIHAEM"/>
</dbReference>
<dbReference type="SUPFAM" id="SSF46458">
    <property type="entry name" value="Globin-like"/>
    <property type="match status" value="1"/>
</dbReference>
<dbReference type="PROSITE" id="PS01033">
    <property type="entry name" value="GLOBIN"/>
    <property type="match status" value="1"/>
</dbReference>
<organism>
    <name type="scientific">Mustela lutreola</name>
    <name type="common">European mink</name>
    <dbReference type="NCBI Taxonomy" id="9666"/>
    <lineage>
        <taxon>Eukaryota</taxon>
        <taxon>Metazoa</taxon>
        <taxon>Chordata</taxon>
        <taxon>Craniata</taxon>
        <taxon>Vertebrata</taxon>
        <taxon>Euteleostomi</taxon>
        <taxon>Mammalia</taxon>
        <taxon>Eutheria</taxon>
        <taxon>Laurasiatheria</taxon>
        <taxon>Carnivora</taxon>
        <taxon>Caniformia</taxon>
        <taxon>Musteloidea</taxon>
        <taxon>Mustelidae</taxon>
        <taxon>Mustelinae</taxon>
        <taxon>Mustela</taxon>
    </lineage>
</organism>
<comment type="function">
    <text>Involved in oxygen transport from the lung to the various peripheral tissues.</text>
</comment>
<comment type="subunit">
    <text>Heterotetramer of two alpha chains and two beta chains.</text>
</comment>
<comment type="tissue specificity">
    <text>Red blood cells.</text>
</comment>
<comment type="polymorphism">
    <text evidence="4">There are two alleles. The sequence shown is that of alpha-1.</text>
</comment>
<comment type="similarity">
    <text evidence="3">Belongs to the globin family.</text>
</comment>
<sequence length="141" mass="15249">VLSPADKTNVKSTWDKIGGHAGEYGGEALERTFASFPTTKTYFPHFDLSHGSAQVKAHGKKVADALTNAVAHMDDLPGAMSALSDLHAYKLRVDPVNFKLLSHCLLVTLACHHPAEFTPAVHASLDKFFSAVSTVLTSKYR</sequence>
<name>HBA_MUSLU</name>